<gene>
    <name evidence="1" type="primary">engB</name>
    <name type="ordered locus">BWG_3535</name>
</gene>
<proteinExistence type="inferred from homology"/>
<feature type="chain" id="PRO_1000205123" description="Probable GTP-binding protein EngB">
    <location>
        <begin position="1"/>
        <end position="210"/>
    </location>
</feature>
<feature type="domain" description="EngB-type G" evidence="1">
    <location>
        <begin position="25"/>
        <end position="199"/>
    </location>
</feature>
<feature type="binding site" evidence="1">
    <location>
        <begin position="33"/>
        <end position="40"/>
    </location>
    <ligand>
        <name>GTP</name>
        <dbReference type="ChEBI" id="CHEBI:37565"/>
    </ligand>
</feature>
<feature type="binding site" evidence="1">
    <location>
        <position position="40"/>
    </location>
    <ligand>
        <name>Mg(2+)</name>
        <dbReference type="ChEBI" id="CHEBI:18420"/>
    </ligand>
</feature>
<feature type="binding site" evidence="1">
    <location>
        <begin position="60"/>
        <end position="64"/>
    </location>
    <ligand>
        <name>GTP</name>
        <dbReference type="ChEBI" id="CHEBI:37565"/>
    </ligand>
</feature>
<feature type="binding site" evidence="1">
    <location>
        <position position="62"/>
    </location>
    <ligand>
        <name>Mg(2+)</name>
        <dbReference type="ChEBI" id="CHEBI:18420"/>
    </ligand>
</feature>
<feature type="binding site" evidence="1">
    <location>
        <begin position="78"/>
        <end position="81"/>
    </location>
    <ligand>
        <name>GTP</name>
        <dbReference type="ChEBI" id="CHEBI:37565"/>
    </ligand>
</feature>
<feature type="binding site" evidence="1">
    <location>
        <begin position="145"/>
        <end position="148"/>
    </location>
    <ligand>
        <name>GTP</name>
        <dbReference type="ChEBI" id="CHEBI:37565"/>
    </ligand>
</feature>
<feature type="binding site" evidence="1">
    <location>
        <begin position="178"/>
        <end position="180"/>
    </location>
    <ligand>
        <name>GTP</name>
        <dbReference type="ChEBI" id="CHEBI:37565"/>
    </ligand>
</feature>
<reference key="1">
    <citation type="journal article" date="2009" name="J. Bacteriol.">
        <title>Genomic sequencing reveals regulatory mutations and recombinational events in the widely used MC4100 lineage of Escherichia coli K-12.</title>
        <authorList>
            <person name="Ferenci T."/>
            <person name="Zhou Z."/>
            <person name="Betteridge T."/>
            <person name="Ren Y."/>
            <person name="Liu Y."/>
            <person name="Feng L."/>
            <person name="Reeves P.R."/>
            <person name="Wang L."/>
        </authorList>
    </citation>
    <scope>NUCLEOTIDE SEQUENCE [LARGE SCALE GENOMIC DNA]</scope>
    <source>
        <strain>K12 / MC4100 / BW2952</strain>
    </source>
</reference>
<dbReference type="EMBL" id="CP001396">
    <property type="protein sequence ID" value="ACR63390.1"/>
    <property type="molecule type" value="Genomic_DNA"/>
</dbReference>
<dbReference type="SMR" id="C5A033"/>
<dbReference type="KEGG" id="ebw:BWG_3535"/>
<dbReference type="HOGENOM" id="CLU_033732_1_2_6"/>
<dbReference type="GO" id="GO:0005829">
    <property type="term" value="C:cytosol"/>
    <property type="evidence" value="ECO:0007669"/>
    <property type="project" value="TreeGrafter"/>
</dbReference>
<dbReference type="GO" id="GO:0005525">
    <property type="term" value="F:GTP binding"/>
    <property type="evidence" value="ECO:0007669"/>
    <property type="project" value="UniProtKB-UniRule"/>
</dbReference>
<dbReference type="GO" id="GO:0046872">
    <property type="term" value="F:metal ion binding"/>
    <property type="evidence" value="ECO:0007669"/>
    <property type="project" value="UniProtKB-KW"/>
</dbReference>
<dbReference type="GO" id="GO:0000917">
    <property type="term" value="P:division septum assembly"/>
    <property type="evidence" value="ECO:0007669"/>
    <property type="project" value="UniProtKB-KW"/>
</dbReference>
<dbReference type="CDD" id="cd01876">
    <property type="entry name" value="YihA_EngB"/>
    <property type="match status" value="1"/>
</dbReference>
<dbReference type="FunFam" id="3.40.50.300:FF:000098">
    <property type="entry name" value="Probable GTP-binding protein EngB"/>
    <property type="match status" value="1"/>
</dbReference>
<dbReference type="Gene3D" id="3.40.50.300">
    <property type="entry name" value="P-loop containing nucleotide triphosphate hydrolases"/>
    <property type="match status" value="1"/>
</dbReference>
<dbReference type="HAMAP" id="MF_00321">
    <property type="entry name" value="GTPase_EngB"/>
    <property type="match status" value="1"/>
</dbReference>
<dbReference type="InterPro" id="IPR030393">
    <property type="entry name" value="G_ENGB_dom"/>
</dbReference>
<dbReference type="InterPro" id="IPR006073">
    <property type="entry name" value="GTP-bd"/>
</dbReference>
<dbReference type="InterPro" id="IPR019987">
    <property type="entry name" value="GTP-bd_ribosome_bio_YsxC"/>
</dbReference>
<dbReference type="InterPro" id="IPR027417">
    <property type="entry name" value="P-loop_NTPase"/>
</dbReference>
<dbReference type="NCBIfam" id="TIGR03598">
    <property type="entry name" value="GTPase_YsxC"/>
    <property type="match status" value="1"/>
</dbReference>
<dbReference type="PANTHER" id="PTHR11649:SF13">
    <property type="entry name" value="ENGB-TYPE G DOMAIN-CONTAINING PROTEIN"/>
    <property type="match status" value="1"/>
</dbReference>
<dbReference type="PANTHER" id="PTHR11649">
    <property type="entry name" value="MSS1/TRME-RELATED GTP-BINDING PROTEIN"/>
    <property type="match status" value="1"/>
</dbReference>
<dbReference type="Pfam" id="PF01926">
    <property type="entry name" value="MMR_HSR1"/>
    <property type="match status" value="1"/>
</dbReference>
<dbReference type="SUPFAM" id="SSF52540">
    <property type="entry name" value="P-loop containing nucleoside triphosphate hydrolases"/>
    <property type="match status" value="1"/>
</dbReference>
<dbReference type="PROSITE" id="PS51706">
    <property type="entry name" value="G_ENGB"/>
    <property type="match status" value="1"/>
</dbReference>
<keyword id="KW-0131">Cell cycle</keyword>
<keyword id="KW-0132">Cell division</keyword>
<keyword id="KW-0342">GTP-binding</keyword>
<keyword id="KW-0460">Magnesium</keyword>
<keyword id="KW-0479">Metal-binding</keyword>
<keyword id="KW-0547">Nucleotide-binding</keyword>
<keyword id="KW-0717">Septation</keyword>
<protein>
    <recommendedName>
        <fullName evidence="1">Probable GTP-binding protein EngB</fullName>
    </recommendedName>
</protein>
<evidence type="ECO:0000255" key="1">
    <source>
        <dbReference type="HAMAP-Rule" id="MF_00321"/>
    </source>
</evidence>
<accession>C5A033</accession>
<sequence>MTNLNYQQTHFVMSAPDIRHLPSDTGIEVAFAGRSNAGKSSALNTLTNQKSLARTSKTPGRTQLINLFEVADGKRLVDLPGYGYAEVPEEMKRKWQRALGEYLEKRQSLQGLVVLMDIRHPLKDLDQQMIEWAVDSNIAVLVLLTKADKLASGARKAQLNMVREAVLAFNGDVQVETFSSLKKQGVDKLRQKLDTWFSEMQPVEETQDGE</sequence>
<name>ENGB_ECOBW</name>
<comment type="function">
    <text evidence="1">Necessary for normal cell division and for the maintenance of normal septation.</text>
</comment>
<comment type="cofactor">
    <cofactor evidence="1">
        <name>Mg(2+)</name>
        <dbReference type="ChEBI" id="CHEBI:18420"/>
    </cofactor>
</comment>
<comment type="similarity">
    <text evidence="1">Belongs to the TRAFAC class TrmE-Era-EngA-EngB-Septin-like GTPase superfamily. EngB GTPase family.</text>
</comment>
<organism>
    <name type="scientific">Escherichia coli (strain K12 / MC4100 / BW2952)</name>
    <dbReference type="NCBI Taxonomy" id="595496"/>
    <lineage>
        <taxon>Bacteria</taxon>
        <taxon>Pseudomonadati</taxon>
        <taxon>Pseudomonadota</taxon>
        <taxon>Gammaproteobacteria</taxon>
        <taxon>Enterobacterales</taxon>
        <taxon>Enterobacteriaceae</taxon>
        <taxon>Escherichia</taxon>
    </lineage>
</organism>